<organism>
    <name type="scientific">Pyrococcus horikoshii (strain ATCC 700860 / DSM 12428 / JCM 9974 / NBRC 100139 / OT-3)</name>
    <dbReference type="NCBI Taxonomy" id="70601"/>
    <lineage>
        <taxon>Archaea</taxon>
        <taxon>Methanobacteriati</taxon>
        <taxon>Methanobacteriota</taxon>
        <taxon>Thermococci</taxon>
        <taxon>Thermococcales</taxon>
        <taxon>Thermococcaceae</taxon>
        <taxon>Pyrococcus</taxon>
    </lineage>
</organism>
<evidence type="ECO:0000255" key="1">
    <source>
        <dbReference type="HAMAP-Rule" id="MF_00026"/>
    </source>
</evidence>
<keyword id="KW-0238">DNA-binding</keyword>
<proteinExistence type="inferred from homology"/>
<protein>
    <recommendedName>
        <fullName evidence="1">DNA-binding protein PH1060</fullName>
    </recommendedName>
</protein>
<dbReference type="EMBL" id="BA000001">
    <property type="protein sequence ID" value="BAA30158.1"/>
    <property type="molecule type" value="Genomic_DNA"/>
</dbReference>
<dbReference type="PIR" id="H71099">
    <property type="entry name" value="H71099"/>
</dbReference>
<dbReference type="SMR" id="O58787"/>
<dbReference type="STRING" id="70601.gene:9378018"/>
<dbReference type="EnsemblBacteria" id="BAA30158">
    <property type="protein sequence ID" value="BAA30158"/>
    <property type="gene ID" value="BAA30158"/>
</dbReference>
<dbReference type="KEGG" id="pho:PH1060"/>
<dbReference type="eggNOG" id="arCOG04179">
    <property type="taxonomic scope" value="Archaea"/>
</dbReference>
<dbReference type="Proteomes" id="UP000000752">
    <property type="component" value="Chromosome"/>
</dbReference>
<dbReference type="GO" id="GO:0005829">
    <property type="term" value="C:cytosol"/>
    <property type="evidence" value="ECO:0007669"/>
    <property type="project" value="TreeGrafter"/>
</dbReference>
<dbReference type="GO" id="GO:0003677">
    <property type="term" value="F:DNA binding"/>
    <property type="evidence" value="ECO:0007669"/>
    <property type="project" value="UniProtKB-UniRule"/>
</dbReference>
<dbReference type="Gene3D" id="1.10.8.140">
    <property type="entry name" value="PDCD5-like"/>
    <property type="match status" value="1"/>
</dbReference>
<dbReference type="HAMAP" id="MF_00026">
    <property type="entry name" value="dsDNA_bind"/>
    <property type="match status" value="1"/>
</dbReference>
<dbReference type="InterPro" id="IPR022889">
    <property type="entry name" value="DNA_bind_arc"/>
</dbReference>
<dbReference type="InterPro" id="IPR002836">
    <property type="entry name" value="PDCD5-like"/>
</dbReference>
<dbReference type="InterPro" id="IPR036883">
    <property type="entry name" value="PDCD5-like_sf"/>
</dbReference>
<dbReference type="NCBIfam" id="NF003268">
    <property type="entry name" value="PRK04239.1"/>
    <property type="match status" value="1"/>
</dbReference>
<dbReference type="PANTHER" id="PTHR10840">
    <property type="entry name" value="PROGRAMMED CELL DEATH PROTEIN 5"/>
    <property type="match status" value="1"/>
</dbReference>
<dbReference type="PANTHER" id="PTHR10840:SF0">
    <property type="entry name" value="PROGRAMMED CELL DEATH PROTEIN 5"/>
    <property type="match status" value="1"/>
</dbReference>
<dbReference type="Pfam" id="PF01984">
    <property type="entry name" value="dsDNA_bind"/>
    <property type="match status" value="1"/>
</dbReference>
<dbReference type="PIRSF" id="PIRSF015730">
    <property type="entry name" value="TFAR19"/>
    <property type="match status" value="1"/>
</dbReference>
<dbReference type="SUPFAM" id="SSF46950">
    <property type="entry name" value="Double-stranded DNA-binding domain"/>
    <property type="match status" value="1"/>
</dbReference>
<accession>O58787</accession>
<feature type="chain" id="PRO_0000121563" description="DNA-binding protein PH1060">
    <location>
        <begin position="1"/>
        <end position="115"/>
    </location>
</feature>
<reference key="1">
    <citation type="journal article" date="1998" name="DNA Res.">
        <title>Complete sequence and gene organization of the genome of a hyper-thermophilic archaebacterium, Pyrococcus horikoshii OT3.</title>
        <authorList>
            <person name="Kawarabayasi Y."/>
            <person name="Sawada M."/>
            <person name="Horikawa H."/>
            <person name="Haikawa Y."/>
            <person name="Hino Y."/>
            <person name="Yamamoto S."/>
            <person name="Sekine M."/>
            <person name="Baba S."/>
            <person name="Kosugi H."/>
            <person name="Hosoyama A."/>
            <person name="Nagai Y."/>
            <person name="Sakai M."/>
            <person name="Ogura K."/>
            <person name="Otsuka R."/>
            <person name="Nakazawa H."/>
            <person name="Takamiya M."/>
            <person name="Ohfuku Y."/>
            <person name="Funahashi T."/>
            <person name="Tanaka T."/>
            <person name="Kudoh Y."/>
            <person name="Yamazaki J."/>
            <person name="Kushida N."/>
            <person name="Oguchi A."/>
            <person name="Aoki K."/>
            <person name="Yoshizawa T."/>
            <person name="Nakamura Y."/>
            <person name="Robb F.T."/>
            <person name="Horikoshi K."/>
            <person name="Masuchi Y."/>
            <person name="Shizuya H."/>
            <person name="Kikuchi H."/>
        </authorList>
    </citation>
    <scope>NUCLEOTIDE SEQUENCE [LARGE SCALE GENOMIC DNA]</scope>
    <source>
        <strain>ATCC 700860 / DSM 12428 / JCM 9974 / NBRC 100139 / OT-3</strain>
    </source>
</reference>
<gene>
    <name type="ordered locus">PH1060</name>
</gene>
<name>Y1060_PYRHO</name>
<sequence length="115" mass="13903">MREMAEDIEEIRRRKLMELQRKYLEQQKAQEEAERQQALIEAQIQAILRKILTPEARERLARVKLVRPELARQVELILVQLYQAGQITERIDDAKLKRILAQIEAKTRREFRIKW</sequence>
<comment type="similarity">
    <text evidence="1">Belongs to the PDCD5 family.</text>
</comment>